<comment type="function">
    <text evidence="1">Small subunit of the arginine-specific carbamoyl phosphate synthase (CPSase). CPSase catalyzes the formation of carbamoyl phosphate from the ammonia moiety of glutamine, carbonate, and phosphate donated by ATP, the first step of the arginine biosynthetic pathway. The small subunit (glutamine amidotransferase) binds and cleaves glutamine to supply the large subunit with the substrate ammonia.</text>
</comment>
<comment type="catalytic activity">
    <reaction evidence="1">
        <text>hydrogencarbonate + L-glutamine + 2 ATP + H2O = carbamoyl phosphate + L-glutamate + 2 ADP + phosphate + 2 H(+)</text>
        <dbReference type="Rhea" id="RHEA:18633"/>
        <dbReference type="ChEBI" id="CHEBI:15377"/>
        <dbReference type="ChEBI" id="CHEBI:15378"/>
        <dbReference type="ChEBI" id="CHEBI:17544"/>
        <dbReference type="ChEBI" id="CHEBI:29985"/>
        <dbReference type="ChEBI" id="CHEBI:30616"/>
        <dbReference type="ChEBI" id="CHEBI:43474"/>
        <dbReference type="ChEBI" id="CHEBI:58228"/>
        <dbReference type="ChEBI" id="CHEBI:58359"/>
        <dbReference type="ChEBI" id="CHEBI:456216"/>
        <dbReference type="EC" id="6.3.5.5"/>
    </reaction>
</comment>
<comment type="catalytic activity">
    <molecule>Carbamoyl phosphate synthase arginine-specific small chain</molecule>
    <reaction evidence="1">
        <text>L-glutamine + H2O = L-glutamate + NH4(+)</text>
        <dbReference type="Rhea" id="RHEA:15889"/>
        <dbReference type="ChEBI" id="CHEBI:15377"/>
        <dbReference type="ChEBI" id="CHEBI:28938"/>
        <dbReference type="ChEBI" id="CHEBI:29985"/>
        <dbReference type="ChEBI" id="CHEBI:58359"/>
    </reaction>
</comment>
<comment type="pathway">
    <text evidence="1">Amino-acid biosynthesis; L-arginine biosynthesis; carbamoyl phosphate from bicarbonate: step 1/1.</text>
</comment>
<comment type="subunit">
    <text evidence="1">Heterodimer composed of 2 chains; the small (or glutamine) chain promotes the hydrolysis of glutamine to ammonia, which is used by the large (or ammonia) chain to synthesize carbamoyl phosphate.</text>
</comment>
<comment type="subcellular location">
    <subcellularLocation>
        <location evidence="1">Mitochondrion matrix</location>
    </subcellularLocation>
</comment>
<comment type="similarity">
    <text evidence="4">Belongs to the CarA family.</text>
</comment>
<reference key="1">
    <citation type="journal article" date="2004" name="Nature">
        <title>Genome evolution in yeasts.</title>
        <authorList>
            <person name="Dujon B."/>
            <person name="Sherman D."/>
            <person name="Fischer G."/>
            <person name="Durrens P."/>
            <person name="Casaregola S."/>
            <person name="Lafontaine I."/>
            <person name="de Montigny J."/>
            <person name="Marck C."/>
            <person name="Neuveglise C."/>
            <person name="Talla E."/>
            <person name="Goffard N."/>
            <person name="Frangeul L."/>
            <person name="Aigle M."/>
            <person name="Anthouard V."/>
            <person name="Babour A."/>
            <person name="Barbe V."/>
            <person name="Barnay S."/>
            <person name="Blanchin S."/>
            <person name="Beckerich J.-M."/>
            <person name="Beyne E."/>
            <person name="Bleykasten C."/>
            <person name="Boisrame A."/>
            <person name="Boyer J."/>
            <person name="Cattolico L."/>
            <person name="Confanioleri F."/>
            <person name="de Daruvar A."/>
            <person name="Despons L."/>
            <person name="Fabre E."/>
            <person name="Fairhead C."/>
            <person name="Ferry-Dumazet H."/>
            <person name="Groppi A."/>
            <person name="Hantraye F."/>
            <person name="Hennequin C."/>
            <person name="Jauniaux N."/>
            <person name="Joyet P."/>
            <person name="Kachouri R."/>
            <person name="Kerrest A."/>
            <person name="Koszul R."/>
            <person name="Lemaire M."/>
            <person name="Lesur I."/>
            <person name="Ma L."/>
            <person name="Muller H."/>
            <person name="Nicaud J.-M."/>
            <person name="Nikolski M."/>
            <person name="Oztas S."/>
            <person name="Ozier-Kalogeropoulos O."/>
            <person name="Pellenz S."/>
            <person name="Potier S."/>
            <person name="Richard G.-F."/>
            <person name="Straub M.-L."/>
            <person name="Suleau A."/>
            <person name="Swennen D."/>
            <person name="Tekaia F."/>
            <person name="Wesolowski-Louvel M."/>
            <person name="Westhof E."/>
            <person name="Wirth B."/>
            <person name="Zeniou-Meyer M."/>
            <person name="Zivanovic Y."/>
            <person name="Bolotin-Fukuhara M."/>
            <person name="Thierry A."/>
            <person name="Bouchier C."/>
            <person name="Caudron B."/>
            <person name="Scarpelli C."/>
            <person name="Gaillardin C."/>
            <person name="Weissenbach J."/>
            <person name="Wincker P."/>
            <person name="Souciet J.-L."/>
        </authorList>
    </citation>
    <scope>NUCLEOTIDE SEQUENCE [LARGE SCALE GENOMIC DNA]</scope>
    <source>
        <strain>ATCC 36239 / CBS 767 / BCRC 21394 / JCM 1990 / NBRC 0083 / IGC 2968</strain>
    </source>
</reference>
<name>CARA_DEBHA</name>
<accession>Q6BJG4</accession>
<organism>
    <name type="scientific">Debaryomyces hansenii (strain ATCC 36239 / CBS 767 / BCRC 21394 / JCM 1990 / NBRC 0083 / IGC 2968)</name>
    <name type="common">Yeast</name>
    <name type="synonym">Torulaspora hansenii</name>
    <dbReference type="NCBI Taxonomy" id="284592"/>
    <lineage>
        <taxon>Eukaryota</taxon>
        <taxon>Fungi</taxon>
        <taxon>Dikarya</taxon>
        <taxon>Ascomycota</taxon>
        <taxon>Saccharomycotina</taxon>
        <taxon>Pichiomycetes</taxon>
        <taxon>Debaryomycetaceae</taxon>
        <taxon>Debaryomyces</taxon>
    </lineage>
</organism>
<proteinExistence type="inferred from homology"/>
<evidence type="ECO:0000250" key="1">
    <source>
        <dbReference type="UniProtKB" id="P22572"/>
    </source>
</evidence>
<evidence type="ECO:0000255" key="2"/>
<evidence type="ECO:0000255" key="3">
    <source>
        <dbReference type="PROSITE-ProRule" id="PRU00605"/>
    </source>
</evidence>
<evidence type="ECO:0000305" key="4"/>
<gene>
    <name type="primary">CPA1</name>
    <name type="ordered locus">DEHA2G02618g</name>
</gene>
<keyword id="KW-0028">Amino-acid biosynthesis</keyword>
<keyword id="KW-0055">Arginine biosynthesis</keyword>
<keyword id="KW-0067">ATP-binding</keyword>
<keyword id="KW-0315">Glutamine amidotransferase</keyword>
<keyword id="KW-0436">Ligase</keyword>
<keyword id="KW-0496">Mitochondrion</keyword>
<keyword id="KW-0547">Nucleotide-binding</keyword>
<keyword id="KW-1185">Reference proteome</keyword>
<keyword id="KW-0809">Transit peptide</keyword>
<dbReference type="EC" id="6.3.5.5" evidence="1"/>
<dbReference type="EMBL" id="CR382139">
    <property type="protein sequence ID" value="CAG90105.1"/>
    <property type="molecule type" value="Genomic_DNA"/>
</dbReference>
<dbReference type="RefSeq" id="XP_461657.1">
    <property type="nucleotide sequence ID" value="XM_461657.1"/>
</dbReference>
<dbReference type="SMR" id="Q6BJG4"/>
<dbReference type="FunCoup" id="Q6BJG4">
    <property type="interactions" value="401"/>
</dbReference>
<dbReference type="STRING" id="284592.Q6BJG4"/>
<dbReference type="GeneID" id="2904523"/>
<dbReference type="KEGG" id="dha:DEHA2G02618g"/>
<dbReference type="VEuPathDB" id="FungiDB:DEHA2G02618g"/>
<dbReference type="eggNOG" id="KOG0370">
    <property type="taxonomic scope" value="Eukaryota"/>
</dbReference>
<dbReference type="HOGENOM" id="CLU_035901_1_0_1"/>
<dbReference type="InParanoid" id="Q6BJG4"/>
<dbReference type="OMA" id="CFSVQYH"/>
<dbReference type="OrthoDB" id="434at2759"/>
<dbReference type="UniPathway" id="UPA00068">
    <property type="reaction ID" value="UER00171"/>
</dbReference>
<dbReference type="Proteomes" id="UP000000599">
    <property type="component" value="Chromosome G"/>
</dbReference>
<dbReference type="GO" id="GO:0005951">
    <property type="term" value="C:carbamoyl-phosphate synthase complex"/>
    <property type="evidence" value="ECO:0007669"/>
    <property type="project" value="EnsemblFungi"/>
</dbReference>
<dbReference type="GO" id="GO:0005759">
    <property type="term" value="C:mitochondrial matrix"/>
    <property type="evidence" value="ECO:0007669"/>
    <property type="project" value="UniProtKB-SubCell"/>
</dbReference>
<dbReference type="GO" id="GO:0005524">
    <property type="term" value="F:ATP binding"/>
    <property type="evidence" value="ECO:0007669"/>
    <property type="project" value="UniProtKB-KW"/>
</dbReference>
<dbReference type="GO" id="GO:0004088">
    <property type="term" value="F:carbamoyl-phosphate synthase (glutamine-hydrolyzing) activity"/>
    <property type="evidence" value="ECO:0007669"/>
    <property type="project" value="UniProtKB-EC"/>
</dbReference>
<dbReference type="GO" id="GO:0004359">
    <property type="term" value="F:glutaminase activity"/>
    <property type="evidence" value="ECO:0007669"/>
    <property type="project" value="RHEA"/>
</dbReference>
<dbReference type="GO" id="GO:0006207">
    <property type="term" value="P:'de novo' pyrimidine nucleobase biosynthetic process"/>
    <property type="evidence" value="ECO:0007669"/>
    <property type="project" value="InterPro"/>
</dbReference>
<dbReference type="GO" id="GO:0006541">
    <property type="term" value="P:glutamine metabolic process"/>
    <property type="evidence" value="ECO:0007669"/>
    <property type="project" value="InterPro"/>
</dbReference>
<dbReference type="GO" id="GO:0006526">
    <property type="term" value="P:L-arginine biosynthetic process"/>
    <property type="evidence" value="ECO:0007669"/>
    <property type="project" value="UniProtKB-UniPathway"/>
</dbReference>
<dbReference type="GO" id="GO:0006221">
    <property type="term" value="P:pyrimidine nucleotide biosynthetic process"/>
    <property type="evidence" value="ECO:0007669"/>
    <property type="project" value="EnsemblFungi"/>
</dbReference>
<dbReference type="CDD" id="cd01744">
    <property type="entry name" value="GATase1_CPSase"/>
    <property type="match status" value="1"/>
</dbReference>
<dbReference type="FunFam" id="3.40.50.880:FF:000016">
    <property type="entry name" value="Carbamoyl-phosphate synthase arginine-specific small chain"/>
    <property type="match status" value="1"/>
</dbReference>
<dbReference type="FunFam" id="3.50.30.20:FF:000003">
    <property type="entry name" value="Carbamoyl-phosphate synthase arginine-specific small chain"/>
    <property type="match status" value="1"/>
</dbReference>
<dbReference type="Gene3D" id="3.40.50.880">
    <property type="match status" value="1"/>
</dbReference>
<dbReference type="Gene3D" id="3.50.30.20">
    <property type="entry name" value="Carbamoyl-phosphate synthase small subunit, N-terminal domain"/>
    <property type="match status" value="1"/>
</dbReference>
<dbReference type="HAMAP" id="MF_01209">
    <property type="entry name" value="CPSase_S_chain"/>
    <property type="match status" value="1"/>
</dbReference>
<dbReference type="InterPro" id="IPR050472">
    <property type="entry name" value="Anth_synth/Amidotransfase"/>
</dbReference>
<dbReference type="InterPro" id="IPR006274">
    <property type="entry name" value="CarbamoylP_synth_ssu"/>
</dbReference>
<dbReference type="InterPro" id="IPR002474">
    <property type="entry name" value="CarbamoylP_synth_ssu_N"/>
</dbReference>
<dbReference type="InterPro" id="IPR036480">
    <property type="entry name" value="CarbP_synth_ssu_N_sf"/>
</dbReference>
<dbReference type="InterPro" id="IPR029062">
    <property type="entry name" value="Class_I_gatase-like"/>
</dbReference>
<dbReference type="InterPro" id="IPR035686">
    <property type="entry name" value="CPSase_GATase1"/>
</dbReference>
<dbReference type="InterPro" id="IPR017926">
    <property type="entry name" value="GATASE"/>
</dbReference>
<dbReference type="NCBIfam" id="TIGR01368">
    <property type="entry name" value="CPSaseIIsmall"/>
    <property type="match status" value="1"/>
</dbReference>
<dbReference type="NCBIfam" id="NF009475">
    <property type="entry name" value="PRK12838.1"/>
    <property type="match status" value="1"/>
</dbReference>
<dbReference type="PANTHER" id="PTHR43418:SF7">
    <property type="entry name" value="CARBAMOYL-PHOSPHATE SYNTHASE SMALL CHAIN"/>
    <property type="match status" value="1"/>
</dbReference>
<dbReference type="PANTHER" id="PTHR43418">
    <property type="entry name" value="MULTIFUNCTIONAL TRYPTOPHAN BIOSYNTHESIS PROTEIN-RELATED"/>
    <property type="match status" value="1"/>
</dbReference>
<dbReference type="Pfam" id="PF00988">
    <property type="entry name" value="CPSase_sm_chain"/>
    <property type="match status" value="1"/>
</dbReference>
<dbReference type="Pfam" id="PF00117">
    <property type="entry name" value="GATase"/>
    <property type="match status" value="1"/>
</dbReference>
<dbReference type="PRINTS" id="PR00097">
    <property type="entry name" value="ANTSNTHASEII"/>
</dbReference>
<dbReference type="PRINTS" id="PR00099">
    <property type="entry name" value="CPSGATASE"/>
</dbReference>
<dbReference type="PRINTS" id="PR00096">
    <property type="entry name" value="GATASE"/>
</dbReference>
<dbReference type="SMART" id="SM01097">
    <property type="entry name" value="CPSase_sm_chain"/>
    <property type="match status" value="1"/>
</dbReference>
<dbReference type="SUPFAM" id="SSF52021">
    <property type="entry name" value="Carbamoyl phosphate synthetase, small subunit N-terminal domain"/>
    <property type="match status" value="1"/>
</dbReference>
<dbReference type="SUPFAM" id="SSF52317">
    <property type="entry name" value="Class I glutamine amidotransferase-like"/>
    <property type="match status" value="1"/>
</dbReference>
<dbReference type="PROSITE" id="PS51273">
    <property type="entry name" value="GATASE_TYPE_1"/>
    <property type="match status" value="1"/>
</dbReference>
<sequence length="429" mass="47132">MIRVIQPPLIASKQLFRRYLATGGTFTNKTSQLDRATLTIKDGPVFSGYSFGANKNISGEAVFTTSLVGYPESMTDPSYKGQILCFTQPLIGNYGVPSSTLKDEFNLLKHMESPSVQCIGIVVADVALEYSHWTAVESLQQWCQRSGVAAISGVDTRQLVSYLREKGSSLAKITIGEEYDADEDAAFEDPGSVNLVHKVSTKAPFHISCPEKYAKGLHIAVLDCGAKENILRCLVERGASLTVFPYNYPIDKIANKFDGIFISNGPGDPTHCSSTTENLAKTMEKYHDLPIFGICLGHQLLALASGARTIKMKYGNRAHNIPALDLTTGKCHITSQNHGYSVDAETLDSDWEPYFTNLNDLSNEGMKHKSRPIFSTQFHPEAKGGPLDTAFLFDKFFENIEQYRATNGLNLGNVDDSLLVDILPKGRVL</sequence>
<feature type="transit peptide" description="Mitochondrion" evidence="2">
    <location>
        <begin position="1"/>
        <end position="20"/>
    </location>
</feature>
<feature type="chain" id="PRO_0000290594" description="Carbamoyl phosphate synthase arginine-specific small chain" evidence="2">
    <location>
        <begin position="21"/>
        <end position="429"/>
    </location>
</feature>
<feature type="domain" description="Glutamine amidotransferase type-1" evidence="3">
    <location>
        <begin position="218"/>
        <end position="406"/>
    </location>
</feature>
<feature type="active site" description="Nucleophile" evidence="3">
    <location>
        <position position="295"/>
    </location>
</feature>
<feature type="active site" evidence="3">
    <location>
        <position position="379"/>
    </location>
</feature>
<feature type="active site" evidence="3">
    <location>
        <position position="381"/>
    </location>
</feature>
<protein>
    <recommendedName>
        <fullName>Carbamoyl phosphate synthase arginine-specific small chain</fullName>
        <shortName>CPS</shortName>
        <shortName>CPSase</shortName>
        <ecNumber evidence="1">6.3.5.5</ecNumber>
    </recommendedName>
    <alternativeName>
        <fullName>Arginine-specific carbamoyl phosphate synthetase, glutamine chain</fullName>
    </alternativeName>
    <alternativeName>
        <fullName>Glutamine-dependent carbamoyl phosphate synthetase</fullName>
    </alternativeName>
</protein>